<reference key="1">
    <citation type="journal article" date="2002" name="Proc. Natl. Acad. Sci. U.S.A.">
        <title>The complete genome of hyperthermophile Methanopyrus kandleri AV19 and monophyly of archaeal methanogens.</title>
        <authorList>
            <person name="Slesarev A.I."/>
            <person name="Mezhevaya K.V."/>
            <person name="Makarova K.S."/>
            <person name="Polushin N.N."/>
            <person name="Shcherbinina O.V."/>
            <person name="Shakhova V.V."/>
            <person name="Belova G.I."/>
            <person name="Aravind L."/>
            <person name="Natale D.A."/>
            <person name="Rogozin I.B."/>
            <person name="Tatusov R.L."/>
            <person name="Wolf Y.I."/>
            <person name="Stetter K.O."/>
            <person name="Malykh A.G."/>
            <person name="Koonin E.V."/>
            <person name="Kozyavkin S.A."/>
        </authorList>
    </citation>
    <scope>NUCLEOTIDE SEQUENCE [LARGE SCALE GENOMIC DNA]</scope>
    <source>
        <strain>AV19 / DSM 6324 / JCM 9639 / NBRC 100938</strain>
    </source>
</reference>
<sequence>MGELYLVGGGLSDVRDLTLRALEVLASVELVLVDTYTSVYDVSEGDLKRLLNGFGGDPEVRMCSRRDLEERFFDLCEGYDRVALLSPGDPMAATTHVALVVEAADRGWDVEIINGVSVFTAAPSKSGLEMYRFGRTATIPLNVRSVYPYDVLESNRQAGLHTLFLLEVAEDGEFVSVADAARYLLEIEREEGRGVLDPSDLAIAVVRLGFEDELVAWGTLEELSDWEPGEPPQALILPASRLREAEREYIRRVLPHIRDVRGV</sequence>
<keyword id="KW-0489">Methyltransferase</keyword>
<keyword id="KW-1185">Reference proteome</keyword>
<keyword id="KW-0949">S-adenosyl-L-methionine</keyword>
<keyword id="KW-0808">Transferase</keyword>
<proteinExistence type="inferred from homology"/>
<protein>
    <recommendedName>
        <fullName evidence="1">Diphthine synthase</fullName>
        <ecNumber evidence="1">2.1.1.98</ecNumber>
    </recommendedName>
    <alternativeName>
        <fullName evidence="1">Diphthamide biosynthesis methyltransferase</fullName>
    </alternativeName>
</protein>
<accession>Q8TXC7</accession>
<comment type="function">
    <text evidence="1">S-adenosyl-L-methionine-dependent methyltransferase that catalyzes the trimethylation of the amino group of the modified target histidine residue in translation elongation factor 2 (EF-2), to form an intermediate called diphthine. The three successive methylation reactions represent the second step of diphthamide biosynthesis.</text>
</comment>
<comment type="catalytic activity">
    <reaction evidence="1">
        <text>2-[(3S)-amino-3-carboxypropyl]-L-histidyl-[translation elongation factor 2] + 3 S-adenosyl-L-methionine = diphthine-[translation elongation factor 2] + 3 S-adenosyl-L-homocysteine + 3 H(+)</text>
        <dbReference type="Rhea" id="RHEA:36415"/>
        <dbReference type="Rhea" id="RHEA-COMP:9749"/>
        <dbReference type="Rhea" id="RHEA-COMP:10172"/>
        <dbReference type="ChEBI" id="CHEBI:15378"/>
        <dbReference type="ChEBI" id="CHEBI:57856"/>
        <dbReference type="ChEBI" id="CHEBI:59789"/>
        <dbReference type="ChEBI" id="CHEBI:73995"/>
        <dbReference type="ChEBI" id="CHEBI:82696"/>
        <dbReference type="EC" id="2.1.1.98"/>
    </reaction>
</comment>
<comment type="pathway">
    <text evidence="1">Protein modification; peptidyl-diphthamide biosynthesis.</text>
</comment>
<comment type="subunit">
    <text evidence="1">Homodimer.</text>
</comment>
<comment type="similarity">
    <text evidence="1">Belongs to the diphthine synthase family.</text>
</comment>
<name>DPHB_METKA</name>
<evidence type="ECO:0000255" key="1">
    <source>
        <dbReference type="HAMAP-Rule" id="MF_01084"/>
    </source>
</evidence>
<organism>
    <name type="scientific">Methanopyrus kandleri (strain AV19 / DSM 6324 / JCM 9639 / NBRC 100938)</name>
    <dbReference type="NCBI Taxonomy" id="190192"/>
    <lineage>
        <taxon>Archaea</taxon>
        <taxon>Methanobacteriati</taxon>
        <taxon>Methanobacteriota</taxon>
        <taxon>Methanomada group</taxon>
        <taxon>Methanopyri</taxon>
        <taxon>Methanopyrales</taxon>
        <taxon>Methanopyraceae</taxon>
        <taxon>Methanopyrus</taxon>
    </lineage>
</organism>
<feature type="chain" id="PRO_0000156119" description="Diphthine synthase">
    <location>
        <begin position="1"/>
        <end position="263"/>
    </location>
</feature>
<feature type="binding site" evidence="1">
    <location>
        <position position="11"/>
    </location>
    <ligand>
        <name>S-adenosyl-L-methionine</name>
        <dbReference type="ChEBI" id="CHEBI:59789"/>
    </ligand>
</feature>
<feature type="binding site" evidence="1">
    <location>
        <position position="89"/>
    </location>
    <ligand>
        <name>S-adenosyl-L-methionine</name>
        <dbReference type="ChEBI" id="CHEBI:59789"/>
    </ligand>
</feature>
<feature type="binding site" evidence="1">
    <location>
        <position position="92"/>
    </location>
    <ligand>
        <name>S-adenosyl-L-methionine</name>
        <dbReference type="ChEBI" id="CHEBI:59789"/>
    </ligand>
</feature>
<feature type="binding site" evidence="1">
    <location>
        <begin position="117"/>
        <end position="118"/>
    </location>
    <ligand>
        <name>S-adenosyl-L-methionine</name>
        <dbReference type="ChEBI" id="CHEBI:59789"/>
    </ligand>
</feature>
<feature type="binding site" evidence="1">
    <location>
        <position position="166"/>
    </location>
    <ligand>
        <name>S-adenosyl-L-methionine</name>
        <dbReference type="ChEBI" id="CHEBI:59789"/>
    </ligand>
</feature>
<feature type="binding site" evidence="1">
    <location>
        <position position="208"/>
    </location>
    <ligand>
        <name>S-adenosyl-L-methionine</name>
        <dbReference type="ChEBI" id="CHEBI:59789"/>
    </ligand>
</feature>
<dbReference type="EC" id="2.1.1.98" evidence="1"/>
<dbReference type="EMBL" id="AE009439">
    <property type="protein sequence ID" value="AAM01961.1"/>
    <property type="molecule type" value="Genomic_DNA"/>
</dbReference>
<dbReference type="RefSeq" id="WP_011019116.1">
    <property type="nucleotide sequence ID" value="NC_003551.1"/>
</dbReference>
<dbReference type="SMR" id="Q8TXC7"/>
<dbReference type="FunCoup" id="Q8TXC7">
    <property type="interactions" value="178"/>
</dbReference>
<dbReference type="STRING" id="190192.MK0747"/>
<dbReference type="PaxDb" id="190192-MK0747"/>
<dbReference type="EnsemblBacteria" id="AAM01961">
    <property type="protein sequence ID" value="AAM01961"/>
    <property type="gene ID" value="MK0747"/>
</dbReference>
<dbReference type="GeneID" id="1476848"/>
<dbReference type="KEGG" id="mka:MK0747"/>
<dbReference type="HOGENOM" id="CLU_066040_0_0_2"/>
<dbReference type="InParanoid" id="Q8TXC7"/>
<dbReference type="OrthoDB" id="39139at2157"/>
<dbReference type="UniPathway" id="UPA00559"/>
<dbReference type="Proteomes" id="UP000001826">
    <property type="component" value="Chromosome"/>
</dbReference>
<dbReference type="GO" id="GO:0004164">
    <property type="term" value="F:diphthine synthase activity"/>
    <property type="evidence" value="ECO:0007669"/>
    <property type="project" value="UniProtKB-UniRule"/>
</dbReference>
<dbReference type="GO" id="GO:0032259">
    <property type="term" value="P:methylation"/>
    <property type="evidence" value="ECO:0007669"/>
    <property type="project" value="UniProtKB-KW"/>
</dbReference>
<dbReference type="GO" id="GO:0017183">
    <property type="term" value="P:protein histidyl modification to diphthamide"/>
    <property type="evidence" value="ECO:0007669"/>
    <property type="project" value="UniProtKB-UniRule"/>
</dbReference>
<dbReference type="CDD" id="cd11647">
    <property type="entry name" value="DHP5_DphB"/>
    <property type="match status" value="1"/>
</dbReference>
<dbReference type="Gene3D" id="3.40.1010.10">
    <property type="entry name" value="Cobalt-precorrin-4 Transmethylase, Domain 1"/>
    <property type="match status" value="1"/>
</dbReference>
<dbReference type="Gene3D" id="3.30.950.10">
    <property type="entry name" value="Methyltransferase, Cobalt-precorrin-4 Transmethylase, Domain 2"/>
    <property type="match status" value="1"/>
</dbReference>
<dbReference type="HAMAP" id="MF_01084">
    <property type="entry name" value="Diphthine_synth"/>
    <property type="match status" value="1"/>
</dbReference>
<dbReference type="InterPro" id="IPR000878">
    <property type="entry name" value="4pyrrol_Mease"/>
</dbReference>
<dbReference type="InterPro" id="IPR035996">
    <property type="entry name" value="4pyrrol_Methylase_sf"/>
</dbReference>
<dbReference type="InterPro" id="IPR014777">
    <property type="entry name" value="4pyrrole_Mease_sub1"/>
</dbReference>
<dbReference type="InterPro" id="IPR014776">
    <property type="entry name" value="4pyrrole_Mease_sub2"/>
</dbReference>
<dbReference type="InterPro" id="IPR004551">
    <property type="entry name" value="Dphthn_synthase"/>
</dbReference>
<dbReference type="NCBIfam" id="TIGR00522">
    <property type="entry name" value="dph5"/>
    <property type="match status" value="1"/>
</dbReference>
<dbReference type="PANTHER" id="PTHR10882:SF0">
    <property type="entry name" value="DIPHTHINE METHYL ESTER SYNTHASE"/>
    <property type="match status" value="1"/>
</dbReference>
<dbReference type="PANTHER" id="PTHR10882">
    <property type="entry name" value="DIPHTHINE SYNTHASE"/>
    <property type="match status" value="1"/>
</dbReference>
<dbReference type="Pfam" id="PF00590">
    <property type="entry name" value="TP_methylase"/>
    <property type="match status" value="1"/>
</dbReference>
<dbReference type="PIRSF" id="PIRSF036432">
    <property type="entry name" value="Diphthine_synth"/>
    <property type="match status" value="1"/>
</dbReference>
<dbReference type="SUPFAM" id="SSF53790">
    <property type="entry name" value="Tetrapyrrole methylase"/>
    <property type="match status" value="1"/>
</dbReference>
<gene>
    <name evidence="1" type="primary">dphB</name>
    <name type="ordered locus">MK0747</name>
</gene>